<dbReference type="EC" id="2.4.99.28" evidence="1"/>
<dbReference type="EMBL" id="AP009240">
    <property type="protein sequence ID" value="BAG79016.1"/>
    <property type="molecule type" value="Genomic_DNA"/>
</dbReference>
<dbReference type="RefSeq" id="WP_000047091.1">
    <property type="nucleotide sequence ID" value="NC_011415.1"/>
</dbReference>
<dbReference type="SMR" id="B6I1T1"/>
<dbReference type="CAZy" id="GT51">
    <property type="family name" value="Glycosyltransferase Family 51"/>
</dbReference>
<dbReference type="GeneID" id="75206064"/>
<dbReference type="KEGG" id="ecy:ECSE_3492"/>
<dbReference type="HOGENOM" id="CLU_006354_1_1_6"/>
<dbReference type="UniPathway" id="UPA00219"/>
<dbReference type="Proteomes" id="UP000008199">
    <property type="component" value="Chromosome"/>
</dbReference>
<dbReference type="GO" id="GO:0009274">
    <property type="term" value="C:peptidoglycan-based cell wall"/>
    <property type="evidence" value="ECO:0007669"/>
    <property type="project" value="InterPro"/>
</dbReference>
<dbReference type="GO" id="GO:0005886">
    <property type="term" value="C:plasma membrane"/>
    <property type="evidence" value="ECO:0007669"/>
    <property type="project" value="UniProtKB-SubCell"/>
</dbReference>
<dbReference type="GO" id="GO:0016763">
    <property type="term" value="F:pentosyltransferase activity"/>
    <property type="evidence" value="ECO:0007669"/>
    <property type="project" value="InterPro"/>
</dbReference>
<dbReference type="GO" id="GO:0008955">
    <property type="term" value="F:peptidoglycan glycosyltransferase activity"/>
    <property type="evidence" value="ECO:0007669"/>
    <property type="project" value="UniProtKB-UniRule"/>
</dbReference>
<dbReference type="GO" id="GO:0071555">
    <property type="term" value="P:cell wall organization"/>
    <property type="evidence" value="ECO:0007669"/>
    <property type="project" value="UniProtKB-KW"/>
</dbReference>
<dbReference type="GO" id="GO:0009252">
    <property type="term" value="P:peptidoglycan biosynthetic process"/>
    <property type="evidence" value="ECO:0007669"/>
    <property type="project" value="UniProtKB-UniRule"/>
</dbReference>
<dbReference type="GO" id="GO:0008360">
    <property type="term" value="P:regulation of cell shape"/>
    <property type="evidence" value="ECO:0007669"/>
    <property type="project" value="UniProtKB-KW"/>
</dbReference>
<dbReference type="FunFam" id="1.10.3810.10:FF:000004">
    <property type="entry name" value="Biosynthetic peptidoglycan transglycosylase"/>
    <property type="match status" value="1"/>
</dbReference>
<dbReference type="Gene3D" id="1.10.3810.10">
    <property type="entry name" value="Biosynthetic peptidoglycan transglycosylase-like"/>
    <property type="match status" value="1"/>
</dbReference>
<dbReference type="HAMAP" id="MF_00766">
    <property type="entry name" value="PGT_MtgA"/>
    <property type="match status" value="1"/>
</dbReference>
<dbReference type="InterPro" id="IPR001264">
    <property type="entry name" value="Glyco_trans_51"/>
</dbReference>
<dbReference type="InterPro" id="IPR023346">
    <property type="entry name" value="Lysozyme-like_dom_sf"/>
</dbReference>
<dbReference type="InterPro" id="IPR036950">
    <property type="entry name" value="PBP_transglycosylase"/>
</dbReference>
<dbReference type="InterPro" id="IPR011812">
    <property type="entry name" value="Pep_trsgly"/>
</dbReference>
<dbReference type="NCBIfam" id="TIGR02070">
    <property type="entry name" value="mono_pep_trsgly"/>
    <property type="match status" value="1"/>
</dbReference>
<dbReference type="PANTHER" id="PTHR30400:SF0">
    <property type="entry name" value="BIOSYNTHETIC PEPTIDOGLYCAN TRANSGLYCOSYLASE"/>
    <property type="match status" value="1"/>
</dbReference>
<dbReference type="PANTHER" id="PTHR30400">
    <property type="entry name" value="MONOFUNCTIONAL BIOSYNTHETIC PEPTIDOGLYCAN TRANSGLYCOSYLASE"/>
    <property type="match status" value="1"/>
</dbReference>
<dbReference type="Pfam" id="PF00912">
    <property type="entry name" value="Transgly"/>
    <property type="match status" value="1"/>
</dbReference>
<dbReference type="SUPFAM" id="SSF53955">
    <property type="entry name" value="Lysozyme-like"/>
    <property type="match status" value="1"/>
</dbReference>
<organism>
    <name type="scientific">Escherichia coli (strain SE11)</name>
    <dbReference type="NCBI Taxonomy" id="409438"/>
    <lineage>
        <taxon>Bacteria</taxon>
        <taxon>Pseudomonadati</taxon>
        <taxon>Pseudomonadota</taxon>
        <taxon>Gammaproteobacteria</taxon>
        <taxon>Enterobacterales</taxon>
        <taxon>Enterobacteriaceae</taxon>
        <taxon>Escherichia</taxon>
    </lineage>
</organism>
<feature type="chain" id="PRO_1000133596" description="Biosynthetic peptidoglycan transglycosylase">
    <location>
        <begin position="1"/>
        <end position="242"/>
    </location>
</feature>
<feature type="transmembrane region" description="Helical" evidence="1">
    <location>
        <begin position="19"/>
        <end position="39"/>
    </location>
</feature>
<evidence type="ECO:0000255" key="1">
    <source>
        <dbReference type="HAMAP-Rule" id="MF_00766"/>
    </source>
</evidence>
<proteinExistence type="inferred from homology"/>
<gene>
    <name evidence="1" type="primary">mtgA</name>
    <name type="ordered locus">ECSE_3492</name>
</gene>
<name>MTGA_ECOSE</name>
<protein>
    <recommendedName>
        <fullName evidence="1">Biosynthetic peptidoglycan transglycosylase</fullName>
        <ecNumber evidence="1">2.4.99.28</ecNumber>
    </recommendedName>
    <alternativeName>
        <fullName evidence="1">Glycan polymerase</fullName>
    </alternativeName>
    <alternativeName>
        <fullName evidence="1">Peptidoglycan glycosyltransferase MtgA</fullName>
        <shortName evidence="1">PGT</shortName>
    </alternativeName>
</protein>
<comment type="function">
    <text evidence="1">Peptidoglycan polymerase that catalyzes glycan chain elongation from lipid-linked precursors.</text>
</comment>
<comment type="catalytic activity">
    <reaction evidence="1">
        <text>[GlcNAc-(1-&gt;4)-Mur2Ac(oyl-L-Ala-gamma-D-Glu-L-Lys-D-Ala-D-Ala)](n)-di-trans,octa-cis-undecaprenyl diphosphate + beta-D-GlcNAc-(1-&gt;4)-Mur2Ac(oyl-L-Ala-gamma-D-Glu-L-Lys-D-Ala-D-Ala)-di-trans,octa-cis-undecaprenyl diphosphate = [GlcNAc-(1-&gt;4)-Mur2Ac(oyl-L-Ala-gamma-D-Glu-L-Lys-D-Ala-D-Ala)](n+1)-di-trans,octa-cis-undecaprenyl diphosphate + di-trans,octa-cis-undecaprenyl diphosphate + H(+)</text>
        <dbReference type="Rhea" id="RHEA:23708"/>
        <dbReference type="Rhea" id="RHEA-COMP:9602"/>
        <dbReference type="Rhea" id="RHEA-COMP:9603"/>
        <dbReference type="ChEBI" id="CHEBI:15378"/>
        <dbReference type="ChEBI" id="CHEBI:58405"/>
        <dbReference type="ChEBI" id="CHEBI:60033"/>
        <dbReference type="ChEBI" id="CHEBI:78435"/>
        <dbReference type="EC" id="2.4.99.28"/>
    </reaction>
</comment>
<comment type="pathway">
    <text evidence="1">Cell wall biogenesis; peptidoglycan biosynthesis.</text>
</comment>
<comment type="subcellular location">
    <subcellularLocation>
        <location evidence="1">Cell inner membrane</location>
        <topology evidence="1">Single-pass membrane protein</topology>
    </subcellularLocation>
</comment>
<comment type="similarity">
    <text evidence="1">Belongs to the glycosyltransferase 51 family.</text>
</comment>
<sequence length="242" mass="27342">MSKSRLTVFSFVRRFLLRLMVVLAVFWGGGIALFSVAPVPFSAVMVERQVSAWLHGNFRYVAHSDWVSMDQISPWMGLAVIAAEDQKFPEHWGFDVASIEKALAHNERNENRIRGASTISQQTAKNLFLWDGRSWVRKGLEAGLTLGIETVWSKKRILTVYLNIAEFGDGVFGVEAAAQRYFHKPASKLTRSEAALLAAVLPNPLRFKVSSPSGYVRSRQAWILRQMYQLGGEPFMQQHQLD</sequence>
<accession>B6I1T1</accession>
<reference key="1">
    <citation type="journal article" date="2008" name="DNA Res.">
        <title>Complete genome sequence and comparative analysis of the wild-type commensal Escherichia coli strain SE11 isolated from a healthy adult.</title>
        <authorList>
            <person name="Oshima K."/>
            <person name="Toh H."/>
            <person name="Ogura Y."/>
            <person name="Sasamoto H."/>
            <person name="Morita H."/>
            <person name="Park S.-H."/>
            <person name="Ooka T."/>
            <person name="Iyoda S."/>
            <person name="Taylor T.D."/>
            <person name="Hayashi T."/>
            <person name="Itoh K."/>
            <person name="Hattori M."/>
        </authorList>
    </citation>
    <scope>NUCLEOTIDE SEQUENCE [LARGE SCALE GENOMIC DNA]</scope>
    <source>
        <strain>SE11</strain>
    </source>
</reference>
<keyword id="KW-0997">Cell inner membrane</keyword>
<keyword id="KW-1003">Cell membrane</keyword>
<keyword id="KW-0133">Cell shape</keyword>
<keyword id="KW-0961">Cell wall biogenesis/degradation</keyword>
<keyword id="KW-0328">Glycosyltransferase</keyword>
<keyword id="KW-0472">Membrane</keyword>
<keyword id="KW-0573">Peptidoglycan synthesis</keyword>
<keyword id="KW-0808">Transferase</keyword>
<keyword id="KW-0812">Transmembrane</keyword>
<keyword id="KW-1133">Transmembrane helix</keyword>